<name>PSB_METBF</name>
<evidence type="ECO:0000255" key="1">
    <source>
        <dbReference type="HAMAP-Rule" id="MF_02113"/>
    </source>
</evidence>
<keyword id="KW-0068">Autocatalytic cleavage</keyword>
<keyword id="KW-0963">Cytoplasm</keyword>
<keyword id="KW-0378">Hydrolase</keyword>
<keyword id="KW-0645">Protease</keyword>
<keyword id="KW-0647">Proteasome</keyword>
<keyword id="KW-0888">Threonine protease</keyword>
<keyword id="KW-0865">Zymogen</keyword>
<comment type="function">
    <text evidence="1">Component of the proteasome core, a large protease complex with broad specificity involved in protein degradation.</text>
</comment>
<comment type="catalytic activity">
    <reaction evidence="1">
        <text>Cleavage of peptide bonds with very broad specificity.</text>
        <dbReference type="EC" id="3.4.25.1"/>
    </reaction>
</comment>
<comment type="activity regulation">
    <text evidence="1">The formation of the proteasomal ATPase PAN-20S proteasome complex, via the docking of the C-termini of PAN into the intersubunit pockets in the alpha-rings, triggers opening of the gate for substrate entry. Interconversion between the open-gate and close-gate conformations leads to a dynamic regulation of the 20S proteasome proteolysis activity.</text>
</comment>
<comment type="subunit">
    <text evidence="1">The 20S proteasome core is composed of 14 alpha and 14 beta subunits that assemble into four stacked heptameric rings, resulting in a barrel-shaped structure. The two inner rings, each composed of seven catalytic beta subunits, are sandwiched by two outer rings, each composed of seven alpha subunits. The catalytic chamber with the active sites is on the inside of the barrel. Has a gated structure, the ends of the cylinder being occluded by the N-termini of the alpha-subunits. Is capped at one or both ends by the proteasome regulatory ATPase, PAN.</text>
</comment>
<comment type="subcellular location">
    <subcellularLocation>
        <location evidence="1">Cytoplasm</location>
    </subcellularLocation>
</comment>
<comment type="similarity">
    <text evidence="1">Belongs to the peptidase T1B family.</text>
</comment>
<reference key="1">
    <citation type="journal article" date="2006" name="J. Bacteriol.">
        <title>The Methanosarcina barkeri genome: comparative analysis with Methanosarcina acetivorans and Methanosarcina mazei reveals extensive rearrangement within methanosarcinal genomes.</title>
        <authorList>
            <person name="Maeder D.L."/>
            <person name="Anderson I."/>
            <person name="Brettin T.S."/>
            <person name="Bruce D.C."/>
            <person name="Gilna P."/>
            <person name="Han C.S."/>
            <person name="Lapidus A."/>
            <person name="Metcalf W.W."/>
            <person name="Saunders E."/>
            <person name="Tapia R."/>
            <person name="Sowers K.R."/>
        </authorList>
    </citation>
    <scope>NUCLEOTIDE SEQUENCE [LARGE SCALE GENOMIC DNA]</scope>
    <source>
        <strain>Fusaro / DSM 804</strain>
    </source>
</reference>
<feature type="propeptide" id="PRO_0000397370" description="Removed in mature form; by autocatalysis" evidence="1">
    <location>
        <begin position="1"/>
        <end position="9"/>
    </location>
</feature>
<feature type="chain" id="PRO_0000397371" description="Proteasome subunit beta">
    <location>
        <begin position="10"/>
        <end position="211"/>
    </location>
</feature>
<feature type="active site" description="Nucleophile" evidence="1">
    <location>
        <position position="10"/>
    </location>
</feature>
<protein>
    <recommendedName>
        <fullName evidence="1">Proteasome subunit beta</fullName>
        <ecNumber evidence="1">3.4.25.1</ecNumber>
    </recommendedName>
    <alternativeName>
        <fullName evidence="1">20S proteasome beta subunit</fullName>
    </alternativeName>
    <alternativeName>
        <fullName evidence="1">Proteasome core protein PsmB</fullName>
    </alternativeName>
</protein>
<accession>Q46G14</accession>
<gene>
    <name evidence="1" type="primary">psmB</name>
    <name type="ordered locus">Mbar_A0194</name>
</gene>
<dbReference type="EC" id="3.4.25.1" evidence="1"/>
<dbReference type="EMBL" id="CP000099">
    <property type="protein sequence ID" value="AAZ69178.1"/>
    <property type="molecule type" value="Genomic_DNA"/>
</dbReference>
<dbReference type="SMR" id="Q46G14"/>
<dbReference type="STRING" id="269797.Mbar_A0194"/>
<dbReference type="MEROPS" id="T01.002"/>
<dbReference type="PaxDb" id="269797-Mbar_A0194"/>
<dbReference type="KEGG" id="mba:Mbar_A0194"/>
<dbReference type="eggNOG" id="arCOG00970">
    <property type="taxonomic scope" value="Archaea"/>
</dbReference>
<dbReference type="HOGENOM" id="CLU_035750_7_2_2"/>
<dbReference type="OrthoDB" id="6330at2157"/>
<dbReference type="GO" id="GO:0005737">
    <property type="term" value="C:cytoplasm"/>
    <property type="evidence" value="ECO:0007669"/>
    <property type="project" value="UniProtKB-SubCell"/>
</dbReference>
<dbReference type="GO" id="GO:0019774">
    <property type="term" value="C:proteasome core complex, beta-subunit complex"/>
    <property type="evidence" value="ECO:0007669"/>
    <property type="project" value="UniProtKB-UniRule"/>
</dbReference>
<dbReference type="GO" id="GO:0004298">
    <property type="term" value="F:threonine-type endopeptidase activity"/>
    <property type="evidence" value="ECO:0007669"/>
    <property type="project" value="UniProtKB-UniRule"/>
</dbReference>
<dbReference type="GO" id="GO:0010498">
    <property type="term" value="P:proteasomal protein catabolic process"/>
    <property type="evidence" value="ECO:0007669"/>
    <property type="project" value="UniProtKB-UniRule"/>
</dbReference>
<dbReference type="CDD" id="cd03764">
    <property type="entry name" value="proteasome_beta_archeal"/>
    <property type="match status" value="1"/>
</dbReference>
<dbReference type="FunFam" id="3.60.20.10:FF:000049">
    <property type="entry name" value="Proteasome subunit beta"/>
    <property type="match status" value="1"/>
</dbReference>
<dbReference type="Gene3D" id="3.60.20.10">
    <property type="entry name" value="Glutamine Phosphoribosylpyrophosphate, subunit 1, domain 1"/>
    <property type="match status" value="1"/>
</dbReference>
<dbReference type="HAMAP" id="MF_02113_A">
    <property type="entry name" value="Proteasome_B_A"/>
    <property type="match status" value="1"/>
</dbReference>
<dbReference type="InterPro" id="IPR029055">
    <property type="entry name" value="Ntn_hydrolases_N"/>
</dbReference>
<dbReference type="InterPro" id="IPR019983">
    <property type="entry name" value="Pept_T1A_Psome_bsu_arc"/>
</dbReference>
<dbReference type="InterPro" id="IPR000243">
    <property type="entry name" value="Pept_T1A_subB"/>
</dbReference>
<dbReference type="InterPro" id="IPR016050">
    <property type="entry name" value="Proteasome_bsu_CS"/>
</dbReference>
<dbReference type="InterPro" id="IPR001353">
    <property type="entry name" value="Proteasome_sua/b"/>
</dbReference>
<dbReference type="InterPro" id="IPR023333">
    <property type="entry name" value="Proteasome_suB-type"/>
</dbReference>
<dbReference type="NCBIfam" id="TIGR03634">
    <property type="entry name" value="arc_protsome_B"/>
    <property type="match status" value="1"/>
</dbReference>
<dbReference type="PANTHER" id="PTHR32194:SF0">
    <property type="entry name" value="ATP-DEPENDENT PROTEASE SUBUNIT HSLV"/>
    <property type="match status" value="1"/>
</dbReference>
<dbReference type="PANTHER" id="PTHR32194">
    <property type="entry name" value="METALLOPROTEASE TLDD"/>
    <property type="match status" value="1"/>
</dbReference>
<dbReference type="Pfam" id="PF00227">
    <property type="entry name" value="Proteasome"/>
    <property type="match status" value="1"/>
</dbReference>
<dbReference type="PRINTS" id="PR00141">
    <property type="entry name" value="PROTEASOME"/>
</dbReference>
<dbReference type="SUPFAM" id="SSF56235">
    <property type="entry name" value="N-terminal nucleophile aminohydrolases (Ntn hydrolases)"/>
    <property type="match status" value="1"/>
</dbReference>
<dbReference type="PROSITE" id="PS00854">
    <property type="entry name" value="PROTEASOME_BETA_1"/>
    <property type="match status" value="1"/>
</dbReference>
<dbReference type="PROSITE" id="PS51476">
    <property type="entry name" value="PROTEASOME_BETA_2"/>
    <property type="match status" value="1"/>
</dbReference>
<organism>
    <name type="scientific">Methanosarcina barkeri (strain Fusaro / DSM 804)</name>
    <dbReference type="NCBI Taxonomy" id="269797"/>
    <lineage>
        <taxon>Archaea</taxon>
        <taxon>Methanobacteriati</taxon>
        <taxon>Methanobacteriota</taxon>
        <taxon>Stenosarchaea group</taxon>
        <taxon>Methanomicrobia</taxon>
        <taxon>Methanosarcinales</taxon>
        <taxon>Methanosarcinaceae</taxon>
        <taxon>Methanosarcina</taxon>
    </lineage>
</organism>
<sequence>MDNDKYLKGTTTVGVVCTDGIVLASEQRATMGNFIASKTAKKVYQIDDLVAMTTAGSVGDAQQLVRLVNVESQLYKMRRNESMTIKGIATLMSNFLNSNRYYPMMVQLLIGGVDKNGPGIYSLDALGGSIEETRISATGSGSPMAYGVLEDQYREDMTVKEGLDLAIRAIHNATKRDSASGENIDVVVITKEAFRRLDPEEVKSIRASLPK</sequence>
<proteinExistence type="inferred from homology"/>